<sequence>MAQQRRGGFKRRKKVDYIAANKIEYVDYKDTELLSRFVSERGKILPRRVTGTSAKNQRKVTTAIKRARVMALMPFVNED</sequence>
<dbReference type="EMBL" id="CP000918">
    <property type="protein sequence ID" value="ACO17754.1"/>
    <property type="molecule type" value="Genomic_DNA"/>
</dbReference>
<dbReference type="RefSeq" id="WP_000068664.1">
    <property type="nucleotide sequence ID" value="NC_012468.1"/>
</dbReference>
<dbReference type="SMR" id="C1C8C8"/>
<dbReference type="GeneID" id="93963800"/>
<dbReference type="KEGG" id="snm:SP70585_1578"/>
<dbReference type="HOGENOM" id="CLU_148710_2_2_9"/>
<dbReference type="Proteomes" id="UP000002211">
    <property type="component" value="Chromosome"/>
</dbReference>
<dbReference type="GO" id="GO:0022627">
    <property type="term" value="C:cytosolic small ribosomal subunit"/>
    <property type="evidence" value="ECO:0007669"/>
    <property type="project" value="TreeGrafter"/>
</dbReference>
<dbReference type="GO" id="GO:0070181">
    <property type="term" value="F:small ribosomal subunit rRNA binding"/>
    <property type="evidence" value="ECO:0007669"/>
    <property type="project" value="TreeGrafter"/>
</dbReference>
<dbReference type="GO" id="GO:0003735">
    <property type="term" value="F:structural constituent of ribosome"/>
    <property type="evidence" value="ECO:0007669"/>
    <property type="project" value="InterPro"/>
</dbReference>
<dbReference type="GO" id="GO:0006412">
    <property type="term" value="P:translation"/>
    <property type="evidence" value="ECO:0007669"/>
    <property type="project" value="UniProtKB-UniRule"/>
</dbReference>
<dbReference type="FunFam" id="4.10.640.10:FF:000003">
    <property type="entry name" value="30S ribosomal protein S18"/>
    <property type="match status" value="1"/>
</dbReference>
<dbReference type="Gene3D" id="4.10.640.10">
    <property type="entry name" value="Ribosomal protein S18"/>
    <property type="match status" value="1"/>
</dbReference>
<dbReference type="HAMAP" id="MF_00270">
    <property type="entry name" value="Ribosomal_bS18"/>
    <property type="match status" value="1"/>
</dbReference>
<dbReference type="InterPro" id="IPR001648">
    <property type="entry name" value="Ribosomal_bS18"/>
</dbReference>
<dbReference type="InterPro" id="IPR018275">
    <property type="entry name" value="Ribosomal_bS18_CS"/>
</dbReference>
<dbReference type="InterPro" id="IPR036870">
    <property type="entry name" value="Ribosomal_bS18_sf"/>
</dbReference>
<dbReference type="NCBIfam" id="TIGR00165">
    <property type="entry name" value="S18"/>
    <property type="match status" value="1"/>
</dbReference>
<dbReference type="PANTHER" id="PTHR13479">
    <property type="entry name" value="30S RIBOSOMAL PROTEIN S18"/>
    <property type="match status" value="1"/>
</dbReference>
<dbReference type="PANTHER" id="PTHR13479:SF40">
    <property type="entry name" value="SMALL RIBOSOMAL SUBUNIT PROTEIN BS18M"/>
    <property type="match status" value="1"/>
</dbReference>
<dbReference type="Pfam" id="PF01084">
    <property type="entry name" value="Ribosomal_S18"/>
    <property type="match status" value="1"/>
</dbReference>
<dbReference type="PRINTS" id="PR00974">
    <property type="entry name" value="RIBOSOMALS18"/>
</dbReference>
<dbReference type="SUPFAM" id="SSF46911">
    <property type="entry name" value="Ribosomal protein S18"/>
    <property type="match status" value="1"/>
</dbReference>
<dbReference type="PROSITE" id="PS00057">
    <property type="entry name" value="RIBOSOMAL_S18"/>
    <property type="match status" value="1"/>
</dbReference>
<feature type="chain" id="PRO_1000196531" description="Small ribosomal subunit protein bS18">
    <location>
        <begin position="1"/>
        <end position="79"/>
    </location>
</feature>
<comment type="function">
    <text evidence="1">Binds as a heterodimer with protein bS6 to the central domain of the 16S rRNA, where it helps stabilize the platform of the 30S subunit.</text>
</comment>
<comment type="subunit">
    <text evidence="1">Part of the 30S ribosomal subunit. Forms a tight heterodimer with protein bS6.</text>
</comment>
<comment type="similarity">
    <text evidence="1">Belongs to the bacterial ribosomal protein bS18 family.</text>
</comment>
<organism>
    <name type="scientific">Streptococcus pneumoniae (strain 70585)</name>
    <dbReference type="NCBI Taxonomy" id="488221"/>
    <lineage>
        <taxon>Bacteria</taxon>
        <taxon>Bacillati</taxon>
        <taxon>Bacillota</taxon>
        <taxon>Bacilli</taxon>
        <taxon>Lactobacillales</taxon>
        <taxon>Streptococcaceae</taxon>
        <taxon>Streptococcus</taxon>
    </lineage>
</organism>
<name>RS18_STRP7</name>
<keyword id="KW-0687">Ribonucleoprotein</keyword>
<keyword id="KW-0689">Ribosomal protein</keyword>
<keyword id="KW-0694">RNA-binding</keyword>
<keyword id="KW-0699">rRNA-binding</keyword>
<reference key="1">
    <citation type="journal article" date="2010" name="Genome Biol.">
        <title>Structure and dynamics of the pan-genome of Streptococcus pneumoniae and closely related species.</title>
        <authorList>
            <person name="Donati C."/>
            <person name="Hiller N.L."/>
            <person name="Tettelin H."/>
            <person name="Muzzi A."/>
            <person name="Croucher N.J."/>
            <person name="Angiuoli S.V."/>
            <person name="Oggioni M."/>
            <person name="Dunning Hotopp J.C."/>
            <person name="Hu F.Z."/>
            <person name="Riley D.R."/>
            <person name="Covacci A."/>
            <person name="Mitchell T.J."/>
            <person name="Bentley S.D."/>
            <person name="Kilian M."/>
            <person name="Ehrlich G.D."/>
            <person name="Rappuoli R."/>
            <person name="Moxon E.R."/>
            <person name="Masignani V."/>
        </authorList>
    </citation>
    <scope>NUCLEOTIDE SEQUENCE [LARGE SCALE GENOMIC DNA]</scope>
    <source>
        <strain>70585</strain>
    </source>
</reference>
<gene>
    <name evidence="1" type="primary">rpsR</name>
    <name type="ordered locus">SP70585_1578</name>
</gene>
<accession>C1C8C8</accession>
<evidence type="ECO:0000255" key="1">
    <source>
        <dbReference type="HAMAP-Rule" id="MF_00270"/>
    </source>
</evidence>
<evidence type="ECO:0000305" key="2"/>
<proteinExistence type="inferred from homology"/>
<protein>
    <recommendedName>
        <fullName evidence="1">Small ribosomal subunit protein bS18</fullName>
    </recommendedName>
    <alternativeName>
        <fullName evidence="2">30S ribosomal protein S18</fullName>
    </alternativeName>
</protein>